<sequence>MYNYLDFEKPVADLEGQILELKKLAQEQGSVEMGDEISRLEKRSADALKDIYRKLTPWQKAQIARHPDRPHCLEYIDRLFTEFTPLAGDRKFANDEALQAGFGRFNGTPVAIIGQEKGSDTKTRLKHNFGSARPEGYRKAVRIMEMADRFQLPLITFVDTAGAYPGVSAEERGQAEAIARSTAECLKLRVPVISIIIGEGGSGGAIAIAVANRVYMLEHSIYSVISPEGAASILWHDSTRAKDAASNMRITAQDLFDLKIIDGIIPEPLGGAHRGKESVIDATGDIIAASLRSMKDIDGETLKQERRQKFLEIGRNI</sequence>
<accession>Q8YJP3</accession>
<feature type="chain" id="PRO_0000223743" description="Acetyl-coenzyme A carboxylase carboxyl transferase subunit alpha">
    <location>
        <begin position="1"/>
        <end position="317"/>
    </location>
</feature>
<feature type="domain" description="CoA carboxyltransferase C-terminal" evidence="2">
    <location>
        <begin position="40"/>
        <end position="293"/>
    </location>
</feature>
<gene>
    <name evidence="1" type="primary">accA</name>
    <name type="ordered locus">BMEI0039</name>
</gene>
<organism>
    <name type="scientific">Brucella melitensis biotype 1 (strain ATCC 23456 / CCUG 17765 / NCTC 10094 / 16M)</name>
    <dbReference type="NCBI Taxonomy" id="224914"/>
    <lineage>
        <taxon>Bacteria</taxon>
        <taxon>Pseudomonadati</taxon>
        <taxon>Pseudomonadota</taxon>
        <taxon>Alphaproteobacteria</taxon>
        <taxon>Hyphomicrobiales</taxon>
        <taxon>Brucellaceae</taxon>
        <taxon>Brucella/Ochrobactrum group</taxon>
        <taxon>Brucella</taxon>
    </lineage>
</organism>
<reference key="1">
    <citation type="journal article" date="2002" name="Proc. Natl. Acad. Sci. U.S.A.">
        <title>The genome sequence of the facultative intracellular pathogen Brucella melitensis.</title>
        <authorList>
            <person name="DelVecchio V.G."/>
            <person name="Kapatral V."/>
            <person name="Redkar R.J."/>
            <person name="Patra G."/>
            <person name="Mujer C."/>
            <person name="Los T."/>
            <person name="Ivanova N."/>
            <person name="Anderson I."/>
            <person name="Bhattacharyya A."/>
            <person name="Lykidis A."/>
            <person name="Reznik G."/>
            <person name="Jablonski L."/>
            <person name="Larsen N."/>
            <person name="D'Souza M."/>
            <person name="Bernal A."/>
            <person name="Mazur M."/>
            <person name="Goltsman E."/>
            <person name="Selkov E."/>
            <person name="Elzer P.H."/>
            <person name="Hagius S."/>
            <person name="O'Callaghan D."/>
            <person name="Letesson J.-J."/>
            <person name="Haselkorn R."/>
            <person name="Kyrpides N.C."/>
            <person name="Overbeek R."/>
        </authorList>
    </citation>
    <scope>NUCLEOTIDE SEQUENCE [LARGE SCALE GENOMIC DNA]</scope>
    <source>
        <strain>ATCC 23456 / CCUG 17765 / NCTC 10094 / 16M</strain>
    </source>
</reference>
<keyword id="KW-0067">ATP-binding</keyword>
<keyword id="KW-0963">Cytoplasm</keyword>
<keyword id="KW-0275">Fatty acid biosynthesis</keyword>
<keyword id="KW-0276">Fatty acid metabolism</keyword>
<keyword id="KW-0444">Lipid biosynthesis</keyword>
<keyword id="KW-0443">Lipid metabolism</keyword>
<keyword id="KW-0547">Nucleotide-binding</keyword>
<keyword id="KW-0808">Transferase</keyword>
<dbReference type="EC" id="2.1.3.15" evidence="1"/>
<dbReference type="EMBL" id="AE008917">
    <property type="protein sequence ID" value="AAL51221.1"/>
    <property type="molecule type" value="Genomic_DNA"/>
</dbReference>
<dbReference type="PIR" id="AB3257">
    <property type="entry name" value="AB3257"/>
</dbReference>
<dbReference type="RefSeq" id="WP_002965096.1">
    <property type="nucleotide sequence ID" value="NZ_GG703778.1"/>
</dbReference>
<dbReference type="SMR" id="Q8YJP3"/>
<dbReference type="KEGG" id="bme:BMEI0039"/>
<dbReference type="KEGG" id="bmel:DK63_1393"/>
<dbReference type="PATRIC" id="fig|224914.52.peg.1471"/>
<dbReference type="eggNOG" id="COG0825">
    <property type="taxonomic scope" value="Bacteria"/>
</dbReference>
<dbReference type="PhylomeDB" id="Q8YJP3"/>
<dbReference type="UniPathway" id="UPA00655">
    <property type="reaction ID" value="UER00711"/>
</dbReference>
<dbReference type="Proteomes" id="UP000000419">
    <property type="component" value="Chromosome I"/>
</dbReference>
<dbReference type="GO" id="GO:0009317">
    <property type="term" value="C:acetyl-CoA carboxylase complex"/>
    <property type="evidence" value="ECO:0007669"/>
    <property type="project" value="InterPro"/>
</dbReference>
<dbReference type="GO" id="GO:0003989">
    <property type="term" value="F:acetyl-CoA carboxylase activity"/>
    <property type="evidence" value="ECO:0007669"/>
    <property type="project" value="InterPro"/>
</dbReference>
<dbReference type="GO" id="GO:0005524">
    <property type="term" value="F:ATP binding"/>
    <property type="evidence" value="ECO:0007669"/>
    <property type="project" value="UniProtKB-KW"/>
</dbReference>
<dbReference type="GO" id="GO:0016743">
    <property type="term" value="F:carboxyl- or carbamoyltransferase activity"/>
    <property type="evidence" value="ECO:0007669"/>
    <property type="project" value="UniProtKB-UniRule"/>
</dbReference>
<dbReference type="GO" id="GO:0006633">
    <property type="term" value="P:fatty acid biosynthetic process"/>
    <property type="evidence" value="ECO:0007669"/>
    <property type="project" value="UniProtKB-KW"/>
</dbReference>
<dbReference type="GO" id="GO:2001295">
    <property type="term" value="P:malonyl-CoA biosynthetic process"/>
    <property type="evidence" value="ECO:0007669"/>
    <property type="project" value="UniProtKB-UniRule"/>
</dbReference>
<dbReference type="Gene3D" id="3.90.226.10">
    <property type="entry name" value="2-enoyl-CoA Hydratase, Chain A, domain 1"/>
    <property type="match status" value="1"/>
</dbReference>
<dbReference type="HAMAP" id="MF_00823">
    <property type="entry name" value="AcetylCoA_CT_alpha"/>
    <property type="match status" value="1"/>
</dbReference>
<dbReference type="InterPro" id="IPR001095">
    <property type="entry name" value="Acetyl_CoA_COase_a_su"/>
</dbReference>
<dbReference type="InterPro" id="IPR029045">
    <property type="entry name" value="ClpP/crotonase-like_dom_sf"/>
</dbReference>
<dbReference type="InterPro" id="IPR011763">
    <property type="entry name" value="COA_CT_C"/>
</dbReference>
<dbReference type="NCBIfam" id="TIGR00513">
    <property type="entry name" value="accA"/>
    <property type="match status" value="1"/>
</dbReference>
<dbReference type="NCBIfam" id="NF041504">
    <property type="entry name" value="AccA_sub"/>
    <property type="match status" value="1"/>
</dbReference>
<dbReference type="NCBIfam" id="NF004344">
    <property type="entry name" value="PRK05724.1"/>
    <property type="match status" value="1"/>
</dbReference>
<dbReference type="PANTHER" id="PTHR42853">
    <property type="entry name" value="ACETYL-COENZYME A CARBOXYLASE CARBOXYL TRANSFERASE SUBUNIT ALPHA"/>
    <property type="match status" value="1"/>
</dbReference>
<dbReference type="PANTHER" id="PTHR42853:SF3">
    <property type="entry name" value="ACETYL-COENZYME A CARBOXYLASE CARBOXYL TRANSFERASE SUBUNIT ALPHA, CHLOROPLASTIC"/>
    <property type="match status" value="1"/>
</dbReference>
<dbReference type="Pfam" id="PF03255">
    <property type="entry name" value="ACCA"/>
    <property type="match status" value="1"/>
</dbReference>
<dbReference type="PRINTS" id="PR01069">
    <property type="entry name" value="ACCCTRFRASEA"/>
</dbReference>
<dbReference type="SUPFAM" id="SSF52096">
    <property type="entry name" value="ClpP/crotonase"/>
    <property type="match status" value="1"/>
</dbReference>
<dbReference type="PROSITE" id="PS50989">
    <property type="entry name" value="COA_CT_CTER"/>
    <property type="match status" value="1"/>
</dbReference>
<name>ACCA_BRUME</name>
<proteinExistence type="inferred from homology"/>
<evidence type="ECO:0000255" key="1">
    <source>
        <dbReference type="HAMAP-Rule" id="MF_00823"/>
    </source>
</evidence>
<evidence type="ECO:0000255" key="2">
    <source>
        <dbReference type="PROSITE-ProRule" id="PRU01137"/>
    </source>
</evidence>
<protein>
    <recommendedName>
        <fullName evidence="1">Acetyl-coenzyme A carboxylase carboxyl transferase subunit alpha</fullName>
        <shortName evidence="1">ACCase subunit alpha</shortName>
        <shortName evidence="1">Acetyl-CoA carboxylase carboxyltransferase subunit alpha</shortName>
        <ecNumber evidence="1">2.1.3.15</ecNumber>
    </recommendedName>
</protein>
<comment type="function">
    <text evidence="1">Component of the acetyl coenzyme A carboxylase (ACC) complex. First, biotin carboxylase catalyzes the carboxylation of biotin on its carrier protein (BCCP) and then the CO(2) group is transferred by the carboxyltransferase to acetyl-CoA to form malonyl-CoA.</text>
</comment>
<comment type="catalytic activity">
    <reaction evidence="1">
        <text>N(6)-carboxybiotinyl-L-lysyl-[protein] + acetyl-CoA = N(6)-biotinyl-L-lysyl-[protein] + malonyl-CoA</text>
        <dbReference type="Rhea" id="RHEA:54728"/>
        <dbReference type="Rhea" id="RHEA-COMP:10505"/>
        <dbReference type="Rhea" id="RHEA-COMP:10506"/>
        <dbReference type="ChEBI" id="CHEBI:57288"/>
        <dbReference type="ChEBI" id="CHEBI:57384"/>
        <dbReference type="ChEBI" id="CHEBI:83144"/>
        <dbReference type="ChEBI" id="CHEBI:83145"/>
        <dbReference type="EC" id="2.1.3.15"/>
    </reaction>
</comment>
<comment type="pathway">
    <text evidence="1">Lipid metabolism; malonyl-CoA biosynthesis; malonyl-CoA from acetyl-CoA: step 1/1.</text>
</comment>
<comment type="subunit">
    <text evidence="1">Acetyl-CoA carboxylase is a heterohexamer composed of biotin carboxyl carrier protein (AccB), biotin carboxylase (AccC) and two subunits each of ACCase subunit alpha (AccA) and ACCase subunit beta (AccD).</text>
</comment>
<comment type="subcellular location">
    <subcellularLocation>
        <location evidence="1">Cytoplasm</location>
    </subcellularLocation>
</comment>
<comment type="similarity">
    <text evidence="1">Belongs to the AccA family.</text>
</comment>